<accession>Q1I5Y3</accession>
<keyword id="KW-0067">ATP-binding</keyword>
<keyword id="KW-0436">Ligase</keyword>
<keyword id="KW-0460">Magnesium</keyword>
<keyword id="KW-0479">Metal-binding</keyword>
<keyword id="KW-0547">Nucleotide-binding</keyword>
<keyword id="KW-0658">Purine biosynthesis</keyword>
<sequence>MTRIGTPLSPTATRVLLCGCGELGKEVVIELQRLGVEVIAVDRYANAPAMQVAHRSHVINMLDGVALRAVIEAEKPHYIVPEIEAIATATLVELENEGFNVVPTARATQLTMNREGIRRLAAEELDLPTSPYHFADTFEDYSKAVADLGYPCVVKPVMSSSGKGQSLLRSADDLQKAWDYAQEGGRAGKGRVIIEGFIDFEYEITLLTVRHVGGTTFLEPVGHRQEKGDYQESWQPQAMSPKALAESQRVAQAVTDALGGRGLFGVELFVKGDQVWFSEVSPRPHDTGLVTLISQELSQFALHARAILGLPIPVVRQFGPSASAVILPEGQSQQTSFANLGAALSEPDTAIRLFGKPEINGTRRMGVCLARDESVEAARAKATRASQAVKVEF</sequence>
<comment type="function">
    <text evidence="1">Involved in the de novo purine biosynthesis. Catalyzes the transfer of formate to 5-phospho-ribosyl-glycinamide (GAR), producing 5-phospho-ribosyl-N-formylglycinamide (FGAR). Formate is provided by PurU via hydrolysis of 10-formyl-tetrahydrofolate.</text>
</comment>
<comment type="catalytic activity">
    <reaction evidence="1">
        <text>N(1)-(5-phospho-beta-D-ribosyl)glycinamide + formate + ATP = N(2)-formyl-N(1)-(5-phospho-beta-D-ribosyl)glycinamide + ADP + phosphate + H(+)</text>
        <dbReference type="Rhea" id="RHEA:24829"/>
        <dbReference type="ChEBI" id="CHEBI:15378"/>
        <dbReference type="ChEBI" id="CHEBI:15740"/>
        <dbReference type="ChEBI" id="CHEBI:30616"/>
        <dbReference type="ChEBI" id="CHEBI:43474"/>
        <dbReference type="ChEBI" id="CHEBI:143788"/>
        <dbReference type="ChEBI" id="CHEBI:147286"/>
        <dbReference type="ChEBI" id="CHEBI:456216"/>
        <dbReference type="EC" id="6.3.1.21"/>
    </reaction>
    <physiologicalReaction direction="left-to-right" evidence="1">
        <dbReference type="Rhea" id="RHEA:24830"/>
    </physiologicalReaction>
</comment>
<comment type="pathway">
    <text evidence="1">Purine metabolism; IMP biosynthesis via de novo pathway; N(2)-formyl-N(1)-(5-phospho-D-ribosyl)glycinamide from N(1)-(5-phospho-D-ribosyl)glycinamide (formate route): step 1/1.</text>
</comment>
<comment type="subunit">
    <text evidence="1">Homodimer.</text>
</comment>
<comment type="similarity">
    <text evidence="1">Belongs to the PurK/PurT family.</text>
</comment>
<name>PURT_PSEE4</name>
<organism>
    <name type="scientific">Pseudomonas entomophila (strain L48)</name>
    <dbReference type="NCBI Taxonomy" id="384676"/>
    <lineage>
        <taxon>Bacteria</taxon>
        <taxon>Pseudomonadati</taxon>
        <taxon>Pseudomonadota</taxon>
        <taxon>Gammaproteobacteria</taxon>
        <taxon>Pseudomonadales</taxon>
        <taxon>Pseudomonadaceae</taxon>
        <taxon>Pseudomonas</taxon>
    </lineage>
</organism>
<protein>
    <recommendedName>
        <fullName evidence="1">Formate-dependent phosphoribosylglycinamide formyltransferase</fullName>
        <ecNumber evidence="1">6.3.1.21</ecNumber>
    </recommendedName>
    <alternativeName>
        <fullName evidence="1">5'-phosphoribosylglycinamide transformylase 2</fullName>
    </alternativeName>
    <alternativeName>
        <fullName evidence="1">Formate-dependent GAR transformylase</fullName>
    </alternativeName>
    <alternativeName>
        <fullName evidence="1">GAR transformylase 2</fullName>
        <shortName evidence="1">GART 2</shortName>
    </alternativeName>
    <alternativeName>
        <fullName evidence="1">Non-folate glycinamide ribonucleotide transformylase</fullName>
    </alternativeName>
    <alternativeName>
        <fullName evidence="1">Phosphoribosylglycinamide formyltransferase 2</fullName>
    </alternativeName>
</protein>
<feature type="chain" id="PRO_0000319210" description="Formate-dependent phosphoribosylglycinamide formyltransferase">
    <location>
        <begin position="1"/>
        <end position="393"/>
    </location>
</feature>
<feature type="domain" description="ATP-grasp" evidence="1">
    <location>
        <begin position="119"/>
        <end position="308"/>
    </location>
</feature>
<feature type="binding site" evidence="1">
    <location>
        <begin position="22"/>
        <end position="23"/>
    </location>
    <ligand>
        <name>N(1)-(5-phospho-beta-D-ribosyl)glycinamide</name>
        <dbReference type="ChEBI" id="CHEBI:143788"/>
    </ligand>
</feature>
<feature type="binding site" evidence="1">
    <location>
        <position position="82"/>
    </location>
    <ligand>
        <name>N(1)-(5-phospho-beta-D-ribosyl)glycinamide</name>
        <dbReference type="ChEBI" id="CHEBI:143788"/>
    </ligand>
</feature>
<feature type="binding site" evidence="1">
    <location>
        <position position="114"/>
    </location>
    <ligand>
        <name>ATP</name>
        <dbReference type="ChEBI" id="CHEBI:30616"/>
    </ligand>
</feature>
<feature type="binding site" evidence="1">
    <location>
        <position position="155"/>
    </location>
    <ligand>
        <name>ATP</name>
        <dbReference type="ChEBI" id="CHEBI:30616"/>
    </ligand>
</feature>
<feature type="binding site" evidence="1">
    <location>
        <begin position="160"/>
        <end position="165"/>
    </location>
    <ligand>
        <name>ATP</name>
        <dbReference type="ChEBI" id="CHEBI:30616"/>
    </ligand>
</feature>
<feature type="binding site" evidence="1">
    <location>
        <begin position="195"/>
        <end position="198"/>
    </location>
    <ligand>
        <name>ATP</name>
        <dbReference type="ChEBI" id="CHEBI:30616"/>
    </ligand>
</feature>
<feature type="binding site" evidence="1">
    <location>
        <position position="203"/>
    </location>
    <ligand>
        <name>ATP</name>
        <dbReference type="ChEBI" id="CHEBI:30616"/>
    </ligand>
</feature>
<feature type="binding site" evidence="1">
    <location>
        <position position="267"/>
    </location>
    <ligand>
        <name>Mg(2+)</name>
        <dbReference type="ChEBI" id="CHEBI:18420"/>
    </ligand>
</feature>
<feature type="binding site" evidence="1">
    <location>
        <position position="279"/>
    </location>
    <ligand>
        <name>Mg(2+)</name>
        <dbReference type="ChEBI" id="CHEBI:18420"/>
    </ligand>
</feature>
<feature type="binding site" evidence="1">
    <location>
        <position position="286"/>
    </location>
    <ligand>
        <name>N(1)-(5-phospho-beta-D-ribosyl)glycinamide</name>
        <dbReference type="ChEBI" id="CHEBI:143788"/>
    </ligand>
</feature>
<feature type="binding site" evidence="1">
    <location>
        <position position="356"/>
    </location>
    <ligand>
        <name>N(1)-(5-phospho-beta-D-ribosyl)glycinamide</name>
        <dbReference type="ChEBI" id="CHEBI:143788"/>
    </ligand>
</feature>
<feature type="binding site" evidence="1">
    <location>
        <begin position="363"/>
        <end position="364"/>
    </location>
    <ligand>
        <name>N(1)-(5-phospho-beta-D-ribosyl)glycinamide</name>
        <dbReference type="ChEBI" id="CHEBI:143788"/>
    </ligand>
</feature>
<evidence type="ECO:0000255" key="1">
    <source>
        <dbReference type="HAMAP-Rule" id="MF_01643"/>
    </source>
</evidence>
<gene>
    <name evidence="1" type="primary">purT</name>
    <name type="ordered locus">PSEEN4265</name>
</gene>
<dbReference type="EC" id="6.3.1.21" evidence="1"/>
<dbReference type="EMBL" id="CT573326">
    <property type="protein sequence ID" value="CAK16952.1"/>
    <property type="molecule type" value="Genomic_DNA"/>
</dbReference>
<dbReference type="RefSeq" id="WP_011535323.1">
    <property type="nucleotide sequence ID" value="NC_008027.1"/>
</dbReference>
<dbReference type="SMR" id="Q1I5Y3"/>
<dbReference type="STRING" id="384676.PSEEN4265"/>
<dbReference type="GeneID" id="32807270"/>
<dbReference type="KEGG" id="pen:PSEEN4265"/>
<dbReference type="eggNOG" id="COG0027">
    <property type="taxonomic scope" value="Bacteria"/>
</dbReference>
<dbReference type="HOGENOM" id="CLU_011534_1_3_6"/>
<dbReference type="OrthoDB" id="9804625at2"/>
<dbReference type="UniPathway" id="UPA00074">
    <property type="reaction ID" value="UER00127"/>
</dbReference>
<dbReference type="Proteomes" id="UP000000658">
    <property type="component" value="Chromosome"/>
</dbReference>
<dbReference type="GO" id="GO:0005829">
    <property type="term" value="C:cytosol"/>
    <property type="evidence" value="ECO:0007669"/>
    <property type="project" value="TreeGrafter"/>
</dbReference>
<dbReference type="GO" id="GO:0005524">
    <property type="term" value="F:ATP binding"/>
    <property type="evidence" value="ECO:0007669"/>
    <property type="project" value="UniProtKB-UniRule"/>
</dbReference>
<dbReference type="GO" id="GO:0000287">
    <property type="term" value="F:magnesium ion binding"/>
    <property type="evidence" value="ECO:0007669"/>
    <property type="project" value="InterPro"/>
</dbReference>
<dbReference type="GO" id="GO:0043815">
    <property type="term" value="F:phosphoribosylglycinamide formyltransferase 2 activity"/>
    <property type="evidence" value="ECO:0007669"/>
    <property type="project" value="UniProtKB-UniRule"/>
</dbReference>
<dbReference type="GO" id="GO:0004644">
    <property type="term" value="F:phosphoribosylglycinamide formyltransferase activity"/>
    <property type="evidence" value="ECO:0007669"/>
    <property type="project" value="InterPro"/>
</dbReference>
<dbReference type="GO" id="GO:0006189">
    <property type="term" value="P:'de novo' IMP biosynthetic process"/>
    <property type="evidence" value="ECO:0007669"/>
    <property type="project" value="UniProtKB-UniRule"/>
</dbReference>
<dbReference type="FunFam" id="3.30.1490.20:FF:000013">
    <property type="entry name" value="Formate-dependent phosphoribosylglycinamide formyltransferase"/>
    <property type="match status" value="1"/>
</dbReference>
<dbReference type="FunFam" id="3.30.470.20:FF:000027">
    <property type="entry name" value="Formate-dependent phosphoribosylglycinamide formyltransferase"/>
    <property type="match status" value="1"/>
</dbReference>
<dbReference type="FunFam" id="3.40.50.20:FF:000007">
    <property type="entry name" value="Formate-dependent phosphoribosylglycinamide formyltransferase"/>
    <property type="match status" value="1"/>
</dbReference>
<dbReference type="Gene3D" id="3.40.50.20">
    <property type="match status" value="1"/>
</dbReference>
<dbReference type="Gene3D" id="3.30.1490.20">
    <property type="entry name" value="ATP-grasp fold, A domain"/>
    <property type="match status" value="1"/>
</dbReference>
<dbReference type="Gene3D" id="3.30.470.20">
    <property type="entry name" value="ATP-grasp fold, B domain"/>
    <property type="match status" value="1"/>
</dbReference>
<dbReference type="HAMAP" id="MF_01643">
    <property type="entry name" value="PurT"/>
    <property type="match status" value="1"/>
</dbReference>
<dbReference type="InterPro" id="IPR011761">
    <property type="entry name" value="ATP-grasp"/>
</dbReference>
<dbReference type="InterPro" id="IPR003135">
    <property type="entry name" value="ATP-grasp_carboxylate-amine"/>
</dbReference>
<dbReference type="InterPro" id="IPR013815">
    <property type="entry name" value="ATP_grasp_subdomain_1"/>
</dbReference>
<dbReference type="InterPro" id="IPR016185">
    <property type="entry name" value="PreATP-grasp_dom_sf"/>
</dbReference>
<dbReference type="InterPro" id="IPR005862">
    <property type="entry name" value="PurT"/>
</dbReference>
<dbReference type="InterPro" id="IPR054350">
    <property type="entry name" value="PurT/PurK_preATP-grasp"/>
</dbReference>
<dbReference type="InterPro" id="IPR048740">
    <property type="entry name" value="PurT_C"/>
</dbReference>
<dbReference type="InterPro" id="IPR011054">
    <property type="entry name" value="Rudment_hybrid_motif"/>
</dbReference>
<dbReference type="NCBIfam" id="NF006766">
    <property type="entry name" value="PRK09288.1"/>
    <property type="match status" value="1"/>
</dbReference>
<dbReference type="NCBIfam" id="TIGR01142">
    <property type="entry name" value="purT"/>
    <property type="match status" value="1"/>
</dbReference>
<dbReference type="PANTHER" id="PTHR43055">
    <property type="entry name" value="FORMATE-DEPENDENT PHOSPHORIBOSYLGLYCINAMIDE FORMYLTRANSFERASE"/>
    <property type="match status" value="1"/>
</dbReference>
<dbReference type="PANTHER" id="PTHR43055:SF1">
    <property type="entry name" value="FORMATE-DEPENDENT PHOSPHORIBOSYLGLYCINAMIDE FORMYLTRANSFERASE"/>
    <property type="match status" value="1"/>
</dbReference>
<dbReference type="Pfam" id="PF02222">
    <property type="entry name" value="ATP-grasp"/>
    <property type="match status" value="1"/>
</dbReference>
<dbReference type="Pfam" id="PF21244">
    <property type="entry name" value="PurT_C"/>
    <property type="match status" value="1"/>
</dbReference>
<dbReference type="Pfam" id="PF22660">
    <property type="entry name" value="RS_preATP-grasp-like"/>
    <property type="match status" value="1"/>
</dbReference>
<dbReference type="SUPFAM" id="SSF56059">
    <property type="entry name" value="Glutathione synthetase ATP-binding domain-like"/>
    <property type="match status" value="1"/>
</dbReference>
<dbReference type="SUPFAM" id="SSF52440">
    <property type="entry name" value="PreATP-grasp domain"/>
    <property type="match status" value="1"/>
</dbReference>
<dbReference type="SUPFAM" id="SSF51246">
    <property type="entry name" value="Rudiment single hybrid motif"/>
    <property type="match status" value="1"/>
</dbReference>
<dbReference type="PROSITE" id="PS50975">
    <property type="entry name" value="ATP_GRASP"/>
    <property type="match status" value="1"/>
</dbReference>
<reference key="1">
    <citation type="journal article" date="2006" name="Nat. Biotechnol.">
        <title>Complete genome sequence of the entomopathogenic and metabolically versatile soil bacterium Pseudomonas entomophila.</title>
        <authorList>
            <person name="Vodovar N."/>
            <person name="Vallenet D."/>
            <person name="Cruveiller S."/>
            <person name="Rouy Z."/>
            <person name="Barbe V."/>
            <person name="Acosta C."/>
            <person name="Cattolico L."/>
            <person name="Jubin C."/>
            <person name="Lajus A."/>
            <person name="Segurens B."/>
            <person name="Vacherie B."/>
            <person name="Wincker P."/>
            <person name="Weissenbach J."/>
            <person name="Lemaitre B."/>
            <person name="Medigue C."/>
            <person name="Boccard F."/>
        </authorList>
    </citation>
    <scope>NUCLEOTIDE SEQUENCE [LARGE SCALE GENOMIC DNA]</scope>
    <source>
        <strain>L48</strain>
    </source>
</reference>
<proteinExistence type="inferred from homology"/>